<organism>
    <name type="scientific">Oryza sativa subsp. indica</name>
    <name type="common">Rice</name>
    <dbReference type="NCBI Taxonomy" id="39946"/>
    <lineage>
        <taxon>Eukaryota</taxon>
        <taxon>Viridiplantae</taxon>
        <taxon>Streptophyta</taxon>
        <taxon>Embryophyta</taxon>
        <taxon>Tracheophyta</taxon>
        <taxon>Spermatophyta</taxon>
        <taxon>Magnoliopsida</taxon>
        <taxon>Liliopsida</taxon>
        <taxon>Poales</taxon>
        <taxon>Poaceae</taxon>
        <taxon>BOP clade</taxon>
        <taxon>Oryzoideae</taxon>
        <taxon>Oryzeae</taxon>
        <taxon>Oryzinae</taxon>
        <taxon>Oryza</taxon>
        <taxon>Oryza sativa</taxon>
    </lineage>
</organism>
<dbReference type="EMBL" id="CM000129">
    <property type="protein sequence ID" value="EAY93936.1"/>
    <property type="molecule type" value="Genomic_DNA"/>
</dbReference>
<dbReference type="SMR" id="A2XSX6"/>
<dbReference type="STRING" id="39946.A2XSX6"/>
<dbReference type="EnsemblPlants" id="BGIOSGA016308-TA">
    <property type="protein sequence ID" value="BGIOSGA016308-PA"/>
    <property type="gene ID" value="BGIOSGA016308"/>
</dbReference>
<dbReference type="Gramene" id="BGIOSGA016308-TA">
    <property type="protein sequence ID" value="BGIOSGA016308-PA"/>
    <property type="gene ID" value="BGIOSGA016308"/>
</dbReference>
<dbReference type="HOGENOM" id="CLU_124666_0_0_1"/>
<dbReference type="OMA" id="FKMEMES"/>
<dbReference type="Proteomes" id="UP000007015">
    <property type="component" value="Chromosome 4"/>
</dbReference>
<dbReference type="GO" id="GO:0005634">
    <property type="term" value="C:nucleus"/>
    <property type="evidence" value="ECO:0007669"/>
    <property type="project" value="TreeGrafter"/>
</dbReference>
<dbReference type="GO" id="GO:0031347">
    <property type="term" value="P:regulation of defense response"/>
    <property type="evidence" value="ECO:0007669"/>
    <property type="project" value="TreeGrafter"/>
</dbReference>
<dbReference type="GO" id="GO:2000022">
    <property type="term" value="P:regulation of jasmonic acid mediated signaling pathway"/>
    <property type="evidence" value="ECO:0007669"/>
    <property type="project" value="TreeGrafter"/>
</dbReference>
<dbReference type="GO" id="GO:0009611">
    <property type="term" value="P:response to wounding"/>
    <property type="evidence" value="ECO:0007669"/>
    <property type="project" value="TreeGrafter"/>
</dbReference>
<dbReference type="InterPro" id="IPR018467">
    <property type="entry name" value="CCT_CS"/>
</dbReference>
<dbReference type="InterPro" id="IPR040390">
    <property type="entry name" value="TIFY/JAZ"/>
</dbReference>
<dbReference type="InterPro" id="IPR010399">
    <property type="entry name" value="Tify_dom"/>
</dbReference>
<dbReference type="PANTHER" id="PTHR33077">
    <property type="entry name" value="PROTEIN TIFY 4A-RELATED-RELATED"/>
    <property type="match status" value="1"/>
</dbReference>
<dbReference type="PANTHER" id="PTHR33077:SF5">
    <property type="entry name" value="PROTEIN TIFY 9"/>
    <property type="match status" value="1"/>
</dbReference>
<dbReference type="Pfam" id="PF09425">
    <property type="entry name" value="Jas_motif"/>
    <property type="match status" value="1"/>
</dbReference>
<dbReference type="Pfam" id="PF06200">
    <property type="entry name" value="tify"/>
    <property type="match status" value="1"/>
</dbReference>
<dbReference type="SMART" id="SM00979">
    <property type="entry name" value="TIFY"/>
    <property type="match status" value="1"/>
</dbReference>
<dbReference type="PROSITE" id="PS51320">
    <property type="entry name" value="TIFY"/>
    <property type="match status" value="1"/>
</dbReference>
<comment type="function">
    <text evidence="1">Repressor of jasmonate responses.</text>
</comment>
<comment type="domain">
    <text evidence="1">The jas domain (135-160) is required for interaction with COI1.</text>
</comment>
<comment type="PTM">
    <text evidence="1">Ubiquitinated. Targeted for degradation by the SCF(COI1) E3 ubiquitin ligase-proteasome pathway during jasmonate signaling.</text>
</comment>
<comment type="similarity">
    <text evidence="5">Belongs to the TIFY/JAZ family.</text>
</comment>
<name>TIF9_ORYSI</name>
<protein>
    <recommendedName>
        <fullName evidence="5">Protein TIFY 9</fullName>
    </recommendedName>
</protein>
<accession>A2XSX6</accession>
<evidence type="ECO:0000250" key="1">
    <source>
        <dbReference type="UniProtKB" id="Q7XPM8"/>
    </source>
</evidence>
<evidence type="ECO:0000255" key="2"/>
<evidence type="ECO:0000255" key="3">
    <source>
        <dbReference type="PROSITE-ProRule" id="PRU00650"/>
    </source>
</evidence>
<evidence type="ECO:0000256" key="4">
    <source>
        <dbReference type="SAM" id="MobiDB-lite"/>
    </source>
</evidence>
<evidence type="ECO:0000305" key="5"/>
<evidence type="ECO:0000312" key="6">
    <source>
        <dbReference type="EMBL" id="EAY93936.1"/>
    </source>
</evidence>
<feature type="chain" id="PRO_0000434847" description="Protein TIFY 9">
    <location>
        <begin position="1"/>
        <end position="188"/>
    </location>
</feature>
<feature type="domain" description="Tify" evidence="3">
    <location>
        <begin position="80"/>
        <end position="114"/>
    </location>
</feature>
<feature type="region of interest" description="Disordered" evidence="4">
    <location>
        <begin position="20"/>
        <end position="41"/>
    </location>
</feature>
<feature type="region of interest" description="Disordered" evidence="4">
    <location>
        <begin position="156"/>
        <end position="188"/>
    </location>
</feature>
<feature type="short sequence motif" description="Jas" evidence="2">
    <location>
        <begin position="135"/>
        <end position="160"/>
    </location>
</feature>
<feature type="compositionally biased region" description="Low complexity" evidence="4">
    <location>
        <begin position="28"/>
        <end position="38"/>
    </location>
</feature>
<feature type="compositionally biased region" description="Basic and acidic residues" evidence="4">
    <location>
        <begin position="179"/>
        <end position="188"/>
    </location>
</feature>
<reference key="1">
    <citation type="journal article" date="2005" name="PLoS Biol.">
        <title>The genomes of Oryza sativa: a history of duplications.</title>
        <authorList>
            <person name="Yu J."/>
            <person name="Wang J."/>
            <person name="Lin W."/>
            <person name="Li S."/>
            <person name="Li H."/>
            <person name="Zhou J."/>
            <person name="Ni P."/>
            <person name="Dong W."/>
            <person name="Hu S."/>
            <person name="Zeng C."/>
            <person name="Zhang J."/>
            <person name="Zhang Y."/>
            <person name="Li R."/>
            <person name="Xu Z."/>
            <person name="Li S."/>
            <person name="Li X."/>
            <person name="Zheng H."/>
            <person name="Cong L."/>
            <person name="Lin L."/>
            <person name="Yin J."/>
            <person name="Geng J."/>
            <person name="Li G."/>
            <person name="Shi J."/>
            <person name="Liu J."/>
            <person name="Lv H."/>
            <person name="Li J."/>
            <person name="Wang J."/>
            <person name="Deng Y."/>
            <person name="Ran L."/>
            <person name="Shi X."/>
            <person name="Wang X."/>
            <person name="Wu Q."/>
            <person name="Li C."/>
            <person name="Ren X."/>
            <person name="Wang J."/>
            <person name="Wang X."/>
            <person name="Li D."/>
            <person name="Liu D."/>
            <person name="Zhang X."/>
            <person name="Ji Z."/>
            <person name="Zhao W."/>
            <person name="Sun Y."/>
            <person name="Zhang Z."/>
            <person name="Bao J."/>
            <person name="Han Y."/>
            <person name="Dong L."/>
            <person name="Ji J."/>
            <person name="Chen P."/>
            <person name="Wu S."/>
            <person name="Liu J."/>
            <person name="Xiao Y."/>
            <person name="Bu D."/>
            <person name="Tan J."/>
            <person name="Yang L."/>
            <person name="Ye C."/>
            <person name="Zhang J."/>
            <person name="Xu J."/>
            <person name="Zhou Y."/>
            <person name="Yu Y."/>
            <person name="Zhang B."/>
            <person name="Zhuang S."/>
            <person name="Wei H."/>
            <person name="Liu B."/>
            <person name="Lei M."/>
            <person name="Yu H."/>
            <person name="Li Y."/>
            <person name="Xu H."/>
            <person name="Wei S."/>
            <person name="He X."/>
            <person name="Fang L."/>
            <person name="Zhang Z."/>
            <person name="Zhang Y."/>
            <person name="Huang X."/>
            <person name="Su Z."/>
            <person name="Tong W."/>
            <person name="Li J."/>
            <person name="Tong Z."/>
            <person name="Li S."/>
            <person name="Ye J."/>
            <person name="Wang L."/>
            <person name="Fang L."/>
            <person name="Lei T."/>
            <person name="Chen C.-S."/>
            <person name="Chen H.-C."/>
            <person name="Xu Z."/>
            <person name="Li H."/>
            <person name="Huang H."/>
            <person name="Zhang F."/>
            <person name="Xu H."/>
            <person name="Li N."/>
            <person name="Zhao C."/>
            <person name="Li S."/>
            <person name="Dong L."/>
            <person name="Huang Y."/>
            <person name="Li L."/>
            <person name="Xi Y."/>
            <person name="Qi Q."/>
            <person name="Li W."/>
            <person name="Zhang B."/>
            <person name="Hu W."/>
            <person name="Zhang Y."/>
            <person name="Tian X."/>
            <person name="Jiao Y."/>
            <person name="Liang X."/>
            <person name="Jin J."/>
            <person name="Gao L."/>
            <person name="Zheng W."/>
            <person name="Hao B."/>
            <person name="Liu S.-M."/>
            <person name="Wang W."/>
            <person name="Yuan L."/>
            <person name="Cao M."/>
            <person name="McDermott J."/>
            <person name="Samudrala R."/>
            <person name="Wang J."/>
            <person name="Wong G.K.-S."/>
            <person name="Yang H."/>
        </authorList>
    </citation>
    <scope>NUCLEOTIDE SEQUENCE [LARGE SCALE GENOMIC DNA]</scope>
    <source>
        <strain>cv. 93-11</strain>
    </source>
</reference>
<proteinExistence type="inferred from homology"/>
<gene>
    <name evidence="5" type="primary">TIFY9</name>
    <name evidence="5" type="synonym">JAZ5</name>
    <name evidence="6" type="ORF">OsI_15710</name>
</gene>
<sequence>MSTRAPVELDFLGLRAAAADADDRHAKSGGSSASSSSSIRGMETSAIARIGPHLLRRVIAAARPPPPPSTAPVPEEMPGAAAAAAPMTLFYNGSVAVFDVSHDKAEAIMRMATEATKAKGLARGNAIVGNFAKEPLTRTKSLQRFLSKRKERLTSLGPYQVGGPAAVGATTSTTTKSFLAKEEEHTAS</sequence>
<keyword id="KW-1184">Jasmonic acid signaling pathway</keyword>
<keyword id="KW-1185">Reference proteome</keyword>
<keyword id="KW-0804">Transcription</keyword>
<keyword id="KW-0805">Transcription regulation</keyword>
<keyword id="KW-0832">Ubl conjugation</keyword>